<protein>
    <recommendedName>
        <fullName evidence="1">Large ribosomal subunit protein uL24</fullName>
    </recommendedName>
    <alternativeName>
        <fullName evidence="2">50S ribosomal protein L24</fullName>
    </alternativeName>
</protein>
<proteinExistence type="inferred from homology"/>
<accession>A6W5U9</accession>
<comment type="function">
    <text evidence="1">One of two assembly initiator proteins, it binds directly to the 5'-end of the 23S rRNA, where it nucleates assembly of the 50S subunit.</text>
</comment>
<comment type="function">
    <text evidence="1">One of the proteins that surrounds the polypeptide exit tunnel on the outside of the subunit.</text>
</comment>
<comment type="subunit">
    <text evidence="1">Part of the 50S ribosomal subunit.</text>
</comment>
<comment type="similarity">
    <text evidence="1">Belongs to the universal ribosomal protein uL24 family.</text>
</comment>
<evidence type="ECO:0000255" key="1">
    <source>
        <dbReference type="HAMAP-Rule" id="MF_01326"/>
    </source>
</evidence>
<evidence type="ECO:0000305" key="2"/>
<sequence>MGKTRIKKGDLVQVITRVRGRRNADGTKTSDLGKQGKVLEVIAETDRVLVEGVNRIKRHTKARPGVEGGIVEREAPIHISNVQLVDPETKKPTRVGIRTEQVERDGRTKTNRIRVAKRSGKDI</sequence>
<organism>
    <name type="scientific">Kineococcus radiotolerans (strain ATCC BAA-149 / DSM 14245 / SRS30216)</name>
    <dbReference type="NCBI Taxonomy" id="266940"/>
    <lineage>
        <taxon>Bacteria</taxon>
        <taxon>Bacillati</taxon>
        <taxon>Actinomycetota</taxon>
        <taxon>Actinomycetes</taxon>
        <taxon>Kineosporiales</taxon>
        <taxon>Kineosporiaceae</taxon>
        <taxon>Kineococcus</taxon>
    </lineage>
</organism>
<dbReference type="EMBL" id="CP000750">
    <property type="protein sequence ID" value="ABS02188.1"/>
    <property type="molecule type" value="Genomic_DNA"/>
</dbReference>
<dbReference type="RefSeq" id="WP_012084970.1">
    <property type="nucleotide sequence ID" value="NC_009664.2"/>
</dbReference>
<dbReference type="SMR" id="A6W5U9"/>
<dbReference type="STRING" id="266940.Krad_0699"/>
<dbReference type="KEGG" id="kra:Krad_0699"/>
<dbReference type="eggNOG" id="COG0198">
    <property type="taxonomic scope" value="Bacteria"/>
</dbReference>
<dbReference type="HOGENOM" id="CLU_093315_2_0_11"/>
<dbReference type="OrthoDB" id="9807419at2"/>
<dbReference type="Proteomes" id="UP000001116">
    <property type="component" value="Chromosome"/>
</dbReference>
<dbReference type="GO" id="GO:1990904">
    <property type="term" value="C:ribonucleoprotein complex"/>
    <property type="evidence" value="ECO:0007669"/>
    <property type="project" value="UniProtKB-KW"/>
</dbReference>
<dbReference type="GO" id="GO:0005840">
    <property type="term" value="C:ribosome"/>
    <property type="evidence" value="ECO:0007669"/>
    <property type="project" value="UniProtKB-KW"/>
</dbReference>
<dbReference type="GO" id="GO:0019843">
    <property type="term" value="F:rRNA binding"/>
    <property type="evidence" value="ECO:0007669"/>
    <property type="project" value="UniProtKB-UniRule"/>
</dbReference>
<dbReference type="GO" id="GO:0003735">
    <property type="term" value="F:structural constituent of ribosome"/>
    <property type="evidence" value="ECO:0007669"/>
    <property type="project" value="InterPro"/>
</dbReference>
<dbReference type="GO" id="GO:0006412">
    <property type="term" value="P:translation"/>
    <property type="evidence" value="ECO:0007669"/>
    <property type="project" value="UniProtKB-UniRule"/>
</dbReference>
<dbReference type="CDD" id="cd06089">
    <property type="entry name" value="KOW_RPL26"/>
    <property type="match status" value="1"/>
</dbReference>
<dbReference type="Gene3D" id="2.30.30.30">
    <property type="match status" value="1"/>
</dbReference>
<dbReference type="HAMAP" id="MF_01326_B">
    <property type="entry name" value="Ribosomal_uL24_B"/>
    <property type="match status" value="1"/>
</dbReference>
<dbReference type="InterPro" id="IPR014722">
    <property type="entry name" value="Rib_uL2_dom2"/>
</dbReference>
<dbReference type="InterPro" id="IPR003256">
    <property type="entry name" value="Ribosomal_uL24"/>
</dbReference>
<dbReference type="InterPro" id="IPR041988">
    <property type="entry name" value="Ribosomal_uL24_KOW"/>
</dbReference>
<dbReference type="InterPro" id="IPR008991">
    <property type="entry name" value="Translation_prot_SH3-like_sf"/>
</dbReference>
<dbReference type="NCBIfam" id="TIGR01079">
    <property type="entry name" value="rplX_bact"/>
    <property type="match status" value="1"/>
</dbReference>
<dbReference type="PANTHER" id="PTHR12903">
    <property type="entry name" value="MITOCHONDRIAL RIBOSOMAL PROTEIN L24"/>
    <property type="match status" value="1"/>
</dbReference>
<dbReference type="Pfam" id="PF17136">
    <property type="entry name" value="ribosomal_L24"/>
    <property type="match status" value="1"/>
</dbReference>
<dbReference type="SUPFAM" id="SSF50104">
    <property type="entry name" value="Translation proteins SH3-like domain"/>
    <property type="match status" value="1"/>
</dbReference>
<reference key="1">
    <citation type="journal article" date="2008" name="PLoS ONE">
        <title>Survival in nuclear waste, extreme resistance, and potential applications gleaned from the genome sequence of Kineococcus radiotolerans SRS30216.</title>
        <authorList>
            <person name="Bagwell C.E."/>
            <person name="Bhat S."/>
            <person name="Hawkins G.M."/>
            <person name="Smith B.W."/>
            <person name="Biswas T."/>
            <person name="Hoover T.R."/>
            <person name="Saunders E."/>
            <person name="Han C.S."/>
            <person name="Tsodikov O.V."/>
            <person name="Shimkets L.J."/>
        </authorList>
    </citation>
    <scope>NUCLEOTIDE SEQUENCE [LARGE SCALE GENOMIC DNA]</scope>
    <source>
        <strain>ATCC BAA-149 / DSM 14245 / SRS30216</strain>
    </source>
</reference>
<keyword id="KW-1185">Reference proteome</keyword>
<keyword id="KW-0687">Ribonucleoprotein</keyword>
<keyword id="KW-0689">Ribosomal protein</keyword>
<keyword id="KW-0694">RNA-binding</keyword>
<keyword id="KW-0699">rRNA-binding</keyword>
<name>RL24_KINRD</name>
<gene>
    <name evidence="1" type="primary">rplX</name>
    <name type="ordered locus">Krad_0699</name>
</gene>
<feature type="chain" id="PRO_0000355688" description="Large ribosomal subunit protein uL24">
    <location>
        <begin position="1"/>
        <end position="123"/>
    </location>
</feature>